<sequence>MAYFQRLISCIFVLFLLSLAFACEARVLLDENNANDQGFVRVNGAHFELNGSPFLFNGFNSYWLMHVAAEPSERYKVSEVLREASSAGLSVCRTWAFSDGGDRALQISPGVYDERVFQGLDFVISEAKKYGIRLILSFVNNYNDFGGKAQYVQWARNAGAQINGDDDFYTNYITKNYYKNHIKKVVTRFNTITGMTYKDDSTIMAWELMNEPRNQADYSGNTLNAWVQEMASFVKSLDNKHLLEIGMEGFYGDSVPERKSINPGYQVGTDFISNHLIKEIDFATIHAYTDQWLSGQSDDAQMIFMQKWMTSHWQDAKNILKKPLVLAEFGKSSRDPGYNQNIRDTFMSTIYRNIYSLAKDGGTMGGSLIWQLVAQGMENYEDGYCIELGKNPSTAGIITSQSHAMTALAHLVKI</sequence>
<dbReference type="EC" id="3.2.1.78"/>
<dbReference type="EMBL" id="AY102168">
    <property type="protein sequence ID" value="AAM26920.1"/>
    <property type="molecule type" value="Genomic_DNA"/>
</dbReference>
<dbReference type="RefSeq" id="NP_001234473.1">
    <property type="nucleotide sequence ID" value="NM_001247544.2"/>
</dbReference>
<dbReference type="SMR" id="Q6YM50"/>
<dbReference type="STRING" id="4081.Q6YM50"/>
<dbReference type="CAZy" id="GH5">
    <property type="family name" value="Glycoside Hydrolase Family 5"/>
</dbReference>
<dbReference type="GeneID" id="544170"/>
<dbReference type="KEGG" id="sly:544170"/>
<dbReference type="HOGENOM" id="CLU_031603_0_0_1"/>
<dbReference type="InParanoid" id="Q6YM50"/>
<dbReference type="OrthoDB" id="406631at2759"/>
<dbReference type="PhylomeDB" id="Q6YM50"/>
<dbReference type="BRENDA" id="3.2.1.78">
    <property type="organism ID" value="3101"/>
</dbReference>
<dbReference type="Proteomes" id="UP000004994">
    <property type="component" value="Unplaced"/>
</dbReference>
<dbReference type="ExpressionAtlas" id="Q6YM50">
    <property type="expression patterns" value="baseline"/>
</dbReference>
<dbReference type="GO" id="GO:0005576">
    <property type="term" value="C:extracellular region"/>
    <property type="evidence" value="ECO:0007669"/>
    <property type="project" value="UniProtKB-SubCell"/>
</dbReference>
<dbReference type="GO" id="GO:0016985">
    <property type="term" value="F:mannan endo-1,4-beta-mannosidase activity"/>
    <property type="evidence" value="ECO:0000318"/>
    <property type="project" value="GO_Central"/>
</dbReference>
<dbReference type="GO" id="GO:0000272">
    <property type="term" value="P:polysaccharide catabolic process"/>
    <property type="evidence" value="ECO:0007669"/>
    <property type="project" value="InterPro"/>
</dbReference>
<dbReference type="FunFam" id="3.20.20.80:FF:000012">
    <property type="entry name" value="Mannan endo-1,4-beta-mannosidase 6"/>
    <property type="match status" value="1"/>
</dbReference>
<dbReference type="Gene3D" id="3.20.20.80">
    <property type="entry name" value="Glycosidases"/>
    <property type="match status" value="1"/>
</dbReference>
<dbReference type="InterPro" id="IPR001547">
    <property type="entry name" value="Glyco_hydro_5"/>
</dbReference>
<dbReference type="InterPro" id="IPR017853">
    <property type="entry name" value="Glycoside_hydrolase_SF"/>
</dbReference>
<dbReference type="InterPro" id="IPR045053">
    <property type="entry name" value="MAN-like"/>
</dbReference>
<dbReference type="PANTHER" id="PTHR31451">
    <property type="match status" value="1"/>
</dbReference>
<dbReference type="PANTHER" id="PTHR31451:SF62">
    <property type="entry name" value="MANNAN ENDO-1,4-BETA-MANNOSIDASE 2"/>
    <property type="match status" value="1"/>
</dbReference>
<dbReference type="Pfam" id="PF00150">
    <property type="entry name" value="Cellulase"/>
    <property type="match status" value="1"/>
</dbReference>
<dbReference type="SUPFAM" id="SSF51445">
    <property type="entry name" value="(Trans)glycosidases"/>
    <property type="match status" value="1"/>
</dbReference>
<protein>
    <recommendedName>
        <fullName>Mannan endo-1,4-beta-mannosidase 5</fullName>
        <ecNumber>3.2.1.78</ecNumber>
    </recommendedName>
    <alternativeName>
        <fullName>Beta-mannanase 5</fullName>
    </alternativeName>
    <alternativeName>
        <fullName>Endo-beta-1,4-mannanase 5</fullName>
    </alternativeName>
    <alternativeName>
        <fullName>LeMAN5</fullName>
    </alternativeName>
</protein>
<comment type="function">
    <text>May be involved in weakening of anther wall during pollen development.</text>
</comment>
<comment type="catalytic activity">
    <reaction>
        <text>Random hydrolysis of (1-&gt;4)-beta-D-mannosidic linkages in mannans, galactomannans and glucomannans.</text>
        <dbReference type="EC" id="3.2.1.78"/>
    </reaction>
</comment>
<comment type="subcellular location">
    <subcellularLocation>
        <location evidence="5">Secreted</location>
    </subcellularLocation>
</comment>
<comment type="developmental stage">
    <text evidence="4">Expressed in anthers and pollen of unopened bud and opening flowers, but not in fully opened flowers.</text>
</comment>
<comment type="similarity">
    <text evidence="5">Belongs to the glycosyl hydrolase 5 (cellulase A) family.</text>
</comment>
<gene>
    <name type="primary">MAN5</name>
</gene>
<keyword id="KW-0326">Glycosidase</keyword>
<keyword id="KW-0378">Hydrolase</keyword>
<keyword id="KW-1185">Reference proteome</keyword>
<keyword id="KW-0964">Secreted</keyword>
<keyword id="KW-0732">Signal</keyword>
<reference key="1">
    <citation type="journal article" date="2004" name="Plant Physiol.">
        <title>A novel endo-beta-mannanase gene in tomato LeMAN5 is associated with anther and pollen development.</title>
        <authorList>
            <person name="Filichkin S.A."/>
            <person name="Leonard J.M."/>
            <person name="Monteros A."/>
            <person name="Liu P.-P."/>
            <person name="Nonogaki H."/>
        </authorList>
    </citation>
    <scope>NUCLEOTIDE SEQUENCE [GENOMIC DNA]</scope>
    <scope>DEVELOPMENTAL STAGE</scope>
    <source>
        <strain>cv. Moneymaker</strain>
    </source>
</reference>
<name>MAN5_SOLLC</name>
<organism>
    <name type="scientific">Solanum lycopersicum</name>
    <name type="common">Tomato</name>
    <name type="synonym">Lycopersicon esculentum</name>
    <dbReference type="NCBI Taxonomy" id="4081"/>
    <lineage>
        <taxon>Eukaryota</taxon>
        <taxon>Viridiplantae</taxon>
        <taxon>Streptophyta</taxon>
        <taxon>Embryophyta</taxon>
        <taxon>Tracheophyta</taxon>
        <taxon>Spermatophyta</taxon>
        <taxon>Magnoliopsida</taxon>
        <taxon>eudicotyledons</taxon>
        <taxon>Gunneridae</taxon>
        <taxon>Pentapetalae</taxon>
        <taxon>asterids</taxon>
        <taxon>lamiids</taxon>
        <taxon>Solanales</taxon>
        <taxon>Solanaceae</taxon>
        <taxon>Solanoideae</taxon>
        <taxon>Solaneae</taxon>
        <taxon>Solanum</taxon>
        <taxon>Solanum subgen. Lycopersicon</taxon>
    </lineage>
</organism>
<accession>Q6YM50</accession>
<proteinExistence type="evidence at transcript level"/>
<feature type="signal peptide" evidence="3">
    <location>
        <begin position="1"/>
        <end position="25"/>
    </location>
</feature>
<feature type="chain" id="PRO_5000088873" description="Mannan endo-1,4-beta-mannosidase 5">
    <location>
        <begin position="26"/>
        <end position="414"/>
    </location>
</feature>
<feature type="active site" description="Proton donor" evidence="2">
    <location>
        <position position="211"/>
    </location>
</feature>
<feature type="active site" description="Nucleophile" evidence="2">
    <location>
        <position position="328"/>
    </location>
</feature>
<feature type="binding site" evidence="1">
    <location>
        <position position="95"/>
    </location>
    <ligand>
        <name>substrate</name>
    </ligand>
</feature>
<feature type="binding site" evidence="1">
    <location>
        <position position="210"/>
    </location>
    <ligand>
        <name>substrate</name>
    </ligand>
</feature>
<feature type="binding site" evidence="1">
    <location>
        <position position="288"/>
    </location>
    <ligand>
        <name>substrate</name>
    </ligand>
</feature>
<feature type="binding site" evidence="1">
    <location>
        <position position="370"/>
    </location>
    <ligand>
        <name>substrate</name>
    </ligand>
</feature>
<evidence type="ECO:0000250" key="1">
    <source>
        <dbReference type="UniProtKB" id="B4XC07"/>
    </source>
</evidence>
<evidence type="ECO:0000250" key="2">
    <source>
        <dbReference type="UniProtKB" id="Q99036"/>
    </source>
</evidence>
<evidence type="ECO:0000255" key="3"/>
<evidence type="ECO:0000269" key="4">
    <source>
    </source>
</evidence>
<evidence type="ECO:0000305" key="5"/>